<gene>
    <name type="primary">IQCA1L</name>
    <name type="synonym">IQCA1P1</name>
</gene>
<dbReference type="EMBL" id="AC010973">
    <property type="status" value="NOT_ANNOTATED_CDS"/>
    <property type="molecule type" value="Genomic_DNA"/>
</dbReference>
<dbReference type="EMBL" id="KF459644">
    <property type="status" value="NOT_ANNOTATED_CDS"/>
    <property type="molecule type" value="Genomic_DNA"/>
</dbReference>
<dbReference type="CCDS" id="CCDS78288.1"/>
<dbReference type="RefSeq" id="NP_001291348.1">
    <property type="nucleotide sequence ID" value="NM_001304419.2"/>
</dbReference>
<dbReference type="SMR" id="A6NCM1"/>
<dbReference type="FunCoup" id="A6NCM1">
    <property type="interactions" value="1"/>
</dbReference>
<dbReference type="IntAct" id="A6NCM1">
    <property type="interactions" value="2"/>
</dbReference>
<dbReference type="STRING" id="9606.ENSP00000482119"/>
<dbReference type="GlyGen" id="A6NCM1">
    <property type="glycosylation" value="1 site, 1 O-linked glycan (1 site)"/>
</dbReference>
<dbReference type="iPTMnet" id="A6NCM1"/>
<dbReference type="PhosphoSitePlus" id="A6NCM1"/>
<dbReference type="BioMuta" id="IQCA1L"/>
<dbReference type="jPOST" id="A6NCM1"/>
<dbReference type="MassIVE" id="A6NCM1"/>
<dbReference type="PaxDb" id="9606-ENSP00000482119"/>
<dbReference type="PeptideAtlas" id="A6NCM1"/>
<dbReference type="ProteomicsDB" id="845"/>
<dbReference type="DNASU" id="392843"/>
<dbReference type="Ensembl" id="ENST00000615129.4">
    <property type="protein sequence ID" value="ENSP00000482119.1"/>
    <property type="gene ID" value="ENSG00000278685.4"/>
</dbReference>
<dbReference type="GeneID" id="392843"/>
<dbReference type="KEGG" id="hsa:392843"/>
<dbReference type="MANE-Select" id="ENST00000615129.4">
    <property type="protein sequence ID" value="ENSP00000482119.1"/>
    <property type="RefSeq nucleotide sequence ID" value="NM_001304419.2"/>
    <property type="RefSeq protein sequence ID" value="NP_001291348.1"/>
</dbReference>
<dbReference type="AGR" id="HGNC:22831"/>
<dbReference type="CTD" id="392843"/>
<dbReference type="DisGeNET" id="392843"/>
<dbReference type="GeneCards" id="IQCA1L"/>
<dbReference type="HGNC" id="HGNC:22831">
    <property type="gene designation" value="IQCA1L"/>
</dbReference>
<dbReference type="HPA" id="ENSG00000278685">
    <property type="expression patterns" value="Tissue enriched (testis)"/>
</dbReference>
<dbReference type="neXtProt" id="NX_A6NCM1"/>
<dbReference type="VEuPathDB" id="HostDB:ENSG00000278685"/>
<dbReference type="eggNOG" id="KOG0740">
    <property type="taxonomic scope" value="Eukaryota"/>
</dbReference>
<dbReference type="GeneTree" id="ENSGT00940000154067"/>
<dbReference type="InParanoid" id="A6NCM1"/>
<dbReference type="OMA" id="WFIECRA"/>
<dbReference type="OrthoDB" id="3046016at2759"/>
<dbReference type="PAN-GO" id="A6NCM1">
    <property type="GO annotations" value="0 GO annotations based on evolutionary models"/>
</dbReference>
<dbReference type="PhylomeDB" id="A6NCM1"/>
<dbReference type="PathwayCommons" id="A6NCM1"/>
<dbReference type="SignaLink" id="A6NCM1"/>
<dbReference type="BioGRID-ORCS" id="392843">
    <property type="hits" value="1 hit in 126 CRISPR screens"/>
</dbReference>
<dbReference type="ChiTaRS" id="IQCA1L">
    <property type="organism name" value="human"/>
</dbReference>
<dbReference type="GenomeRNAi" id="392843"/>
<dbReference type="Pharos" id="A6NCM1">
    <property type="development level" value="Tdark"/>
</dbReference>
<dbReference type="PRO" id="PR:A6NCM1"/>
<dbReference type="Proteomes" id="UP000005640">
    <property type="component" value="Chromosome 7"/>
</dbReference>
<dbReference type="RNAct" id="A6NCM1">
    <property type="molecule type" value="protein"/>
</dbReference>
<dbReference type="Bgee" id="ENSG00000278685">
    <property type="expression patterns" value="Expressed in male germ line stem cell (sensu Vertebrata) in testis and 37 other cell types or tissues"/>
</dbReference>
<dbReference type="ExpressionAtlas" id="A6NCM1">
    <property type="expression patterns" value="baseline and differential"/>
</dbReference>
<dbReference type="GO" id="GO:0005524">
    <property type="term" value="F:ATP binding"/>
    <property type="evidence" value="ECO:0007669"/>
    <property type="project" value="UniProtKB-KW"/>
</dbReference>
<dbReference type="GO" id="GO:0016887">
    <property type="term" value="F:ATP hydrolysis activity"/>
    <property type="evidence" value="ECO:0000318"/>
    <property type="project" value="GO_Central"/>
</dbReference>
<dbReference type="GO" id="GO:0008568">
    <property type="term" value="F:microtubule severing ATPase activity"/>
    <property type="evidence" value="ECO:0000318"/>
    <property type="project" value="GO_Central"/>
</dbReference>
<dbReference type="FunFam" id="1.10.8.60:FF:000092">
    <property type="entry name" value="IQ motif containing with AAA domain 1 like"/>
    <property type="match status" value="1"/>
</dbReference>
<dbReference type="Gene3D" id="1.10.8.60">
    <property type="match status" value="1"/>
</dbReference>
<dbReference type="Gene3D" id="3.40.50.300">
    <property type="entry name" value="P-loop containing nucleotide triphosphate hydrolases"/>
    <property type="match status" value="1"/>
</dbReference>
<dbReference type="InterPro" id="IPR003959">
    <property type="entry name" value="ATPase_AAA_core"/>
</dbReference>
<dbReference type="InterPro" id="IPR000048">
    <property type="entry name" value="IQ_motif_EF-hand-BS"/>
</dbReference>
<dbReference type="InterPro" id="IPR052267">
    <property type="entry name" value="N-DRC_Component"/>
</dbReference>
<dbReference type="InterPro" id="IPR027417">
    <property type="entry name" value="P-loop_NTPase"/>
</dbReference>
<dbReference type="PANTHER" id="PTHR14690:SF6">
    <property type="entry name" value="IQ AND AAA DOMAIN-CONTAINING PROTEIN 1-LIKE"/>
    <property type="match status" value="1"/>
</dbReference>
<dbReference type="PANTHER" id="PTHR14690">
    <property type="entry name" value="IQ MOTIF CONTAINING WITH AAA DOMAIN 1"/>
    <property type="match status" value="1"/>
</dbReference>
<dbReference type="Pfam" id="PF00004">
    <property type="entry name" value="AAA"/>
    <property type="match status" value="1"/>
</dbReference>
<dbReference type="Pfam" id="PF00612">
    <property type="entry name" value="IQ"/>
    <property type="match status" value="1"/>
</dbReference>
<dbReference type="SMART" id="SM00015">
    <property type="entry name" value="IQ"/>
    <property type="match status" value="2"/>
</dbReference>
<dbReference type="SUPFAM" id="SSF52540">
    <property type="entry name" value="P-loop containing nucleoside triphosphate hydrolases"/>
    <property type="match status" value="1"/>
</dbReference>
<dbReference type="PROSITE" id="PS50096">
    <property type="entry name" value="IQ"/>
    <property type="match status" value="1"/>
</dbReference>
<sequence length="818" mass="95061">MSEGAYQRLWESSHATLQELLDQEQLLLEPAPDRERQSFQYRLASLYLHYLGLLRRFDTVYDQMVQPQKRRLLRRLLDGVAGRVLELKDELVRADLCENHCLDRVLQDFKLTPADLEVPIPKYFLLEQSTTVRERGLILAEILSRLEPVSSQKSFTGMHRTEAIILVQKAERARQGRLRATFMREIRRDEEQDGRIREDGWHKFSQGQAAVTIQKVWKGYLQRKRTQQDRRMEMEFIGMLPSPNQVEHLSIISQPCLVEDVQRLRQMEKEEEFRAAMVKAHDSLVETEGPDMKEKMKEQIRQWFIECHDLTGRFPDYPDASSGGSYSIFADKTPEQVRMELEMQMQENRKKEQEKSKEKGKDEKEKKKGKEEKAKKGEVDAVLQVLPSKCIPMICAGHEEYLNTWKNRCESIHPSQNYDSETLREEKRKEVELEIRIQVDELMRQELRKLRLAVDKEEERPLRAPKKTPGKKTGKKKEKDLTSDRSVESLYEELVISGLLRKSESVALKDYIGDFLYLGSTLSLVKKLPMPSLFDIRQNVALYAVLRLGSPDIHIMAPLIRSILLVGPSGMGKKMLVKAVCTETGANLFDLSPENLLGKYPGRNGAQMMVHIVFKVARLLQPSVIWIGNAEKNFYKKTPKEDKEMDPKRIKKDLTKALRLLTPGDRVMLIGTTSRPQLAEMRGLCRVYERILFMPRPDYASRYVLWKRMIEARGIQPTQHLDISALAKVSDGYTPGHILQAIQSVLSERRFLQLSKRPLVASEFLGQLVKLDPVYREEEESLKDWYFKTPLGKKSMKHRMDQLEAEEAKLDKEKKKRK</sequence>
<keyword id="KW-0067">ATP-binding</keyword>
<keyword id="KW-0547">Nucleotide-binding</keyword>
<keyword id="KW-1267">Proteomics identification</keyword>
<keyword id="KW-1185">Reference proteome</keyword>
<feature type="chain" id="PRO_0000341249" description="IQ and AAA domain-containing protein 1-like">
    <location>
        <begin position="1"/>
        <end position="818"/>
    </location>
</feature>
<feature type="domain" description="IQ" evidence="2">
    <location>
        <begin position="206"/>
        <end position="235"/>
    </location>
</feature>
<feature type="region of interest" description="Disordered" evidence="3">
    <location>
        <begin position="344"/>
        <end position="377"/>
    </location>
</feature>
<feature type="region of interest" description="Disordered" evidence="3">
    <location>
        <begin position="458"/>
        <end position="482"/>
    </location>
</feature>
<feature type="region of interest" description="Disordered" evidence="3">
    <location>
        <begin position="795"/>
        <end position="818"/>
    </location>
</feature>
<feature type="compositionally biased region" description="Basic residues" evidence="3">
    <location>
        <begin position="463"/>
        <end position="476"/>
    </location>
</feature>
<feature type="compositionally biased region" description="Basic and acidic residues" evidence="3">
    <location>
        <begin position="798"/>
        <end position="818"/>
    </location>
</feature>
<feature type="binding site" evidence="1">
    <location>
        <begin position="567"/>
        <end position="574"/>
    </location>
    <ligand>
        <name>ATP</name>
        <dbReference type="ChEBI" id="CHEBI:30616"/>
    </ligand>
</feature>
<comment type="similarity">
    <text evidence="4">Belongs to the AAA ATPase family.</text>
</comment>
<proteinExistence type="evidence at protein level"/>
<reference key="1">
    <citation type="journal article" date="2003" name="Nature">
        <title>The DNA sequence of human chromosome 7.</title>
        <authorList>
            <person name="Hillier L.W."/>
            <person name="Fulton R.S."/>
            <person name="Fulton L.A."/>
            <person name="Graves T.A."/>
            <person name="Pepin K.H."/>
            <person name="Wagner-McPherson C."/>
            <person name="Layman D."/>
            <person name="Maas J."/>
            <person name="Jaeger S."/>
            <person name="Walker R."/>
            <person name="Wylie K."/>
            <person name="Sekhon M."/>
            <person name="Becker M.C."/>
            <person name="O'Laughlin M.D."/>
            <person name="Schaller M.E."/>
            <person name="Fewell G.A."/>
            <person name="Delehaunty K.D."/>
            <person name="Miner T.L."/>
            <person name="Nash W.E."/>
            <person name="Cordes M."/>
            <person name="Du H."/>
            <person name="Sun H."/>
            <person name="Edwards J."/>
            <person name="Bradshaw-Cordum H."/>
            <person name="Ali J."/>
            <person name="Andrews S."/>
            <person name="Isak A."/>
            <person name="Vanbrunt A."/>
            <person name="Nguyen C."/>
            <person name="Du F."/>
            <person name="Lamar B."/>
            <person name="Courtney L."/>
            <person name="Kalicki J."/>
            <person name="Ozersky P."/>
            <person name="Bielicki L."/>
            <person name="Scott K."/>
            <person name="Holmes A."/>
            <person name="Harkins R."/>
            <person name="Harris A."/>
            <person name="Strong C.M."/>
            <person name="Hou S."/>
            <person name="Tomlinson C."/>
            <person name="Dauphin-Kohlberg S."/>
            <person name="Kozlowicz-Reilly A."/>
            <person name="Leonard S."/>
            <person name="Rohlfing T."/>
            <person name="Rock S.M."/>
            <person name="Tin-Wollam A.-M."/>
            <person name="Abbott A."/>
            <person name="Minx P."/>
            <person name="Maupin R."/>
            <person name="Strowmatt C."/>
            <person name="Latreille P."/>
            <person name="Miller N."/>
            <person name="Johnson D."/>
            <person name="Murray J."/>
            <person name="Woessner J.P."/>
            <person name="Wendl M.C."/>
            <person name="Yang S.-P."/>
            <person name="Schultz B.R."/>
            <person name="Wallis J.W."/>
            <person name="Spieth J."/>
            <person name="Bieri T.A."/>
            <person name="Nelson J.O."/>
            <person name="Berkowicz N."/>
            <person name="Wohldmann P.E."/>
            <person name="Cook L.L."/>
            <person name="Hickenbotham M.T."/>
            <person name="Eldred J."/>
            <person name="Williams D."/>
            <person name="Bedell J.A."/>
            <person name="Mardis E.R."/>
            <person name="Clifton S.W."/>
            <person name="Chissoe S.L."/>
            <person name="Marra M.A."/>
            <person name="Raymond C."/>
            <person name="Haugen E."/>
            <person name="Gillett W."/>
            <person name="Zhou Y."/>
            <person name="James R."/>
            <person name="Phelps K."/>
            <person name="Iadanoto S."/>
            <person name="Bubb K."/>
            <person name="Simms E."/>
            <person name="Levy R."/>
            <person name="Clendenning J."/>
            <person name="Kaul R."/>
            <person name="Kent W.J."/>
            <person name="Furey T.S."/>
            <person name="Baertsch R.A."/>
            <person name="Brent M.R."/>
            <person name="Keibler E."/>
            <person name="Flicek P."/>
            <person name="Bork P."/>
            <person name="Suyama M."/>
            <person name="Bailey J.A."/>
            <person name="Portnoy M.E."/>
            <person name="Torrents D."/>
            <person name="Chinwalla A.T."/>
            <person name="Gish W.R."/>
            <person name="Eddy S.R."/>
            <person name="McPherson J.D."/>
            <person name="Olson M.V."/>
            <person name="Eichler E.E."/>
            <person name="Green E.D."/>
            <person name="Waterston R.H."/>
            <person name="Wilson R.K."/>
        </authorList>
    </citation>
    <scope>NUCLEOTIDE SEQUENCE [LARGE SCALE GENOMIC DNA]</scope>
</reference>
<organism>
    <name type="scientific">Homo sapiens</name>
    <name type="common">Human</name>
    <dbReference type="NCBI Taxonomy" id="9606"/>
    <lineage>
        <taxon>Eukaryota</taxon>
        <taxon>Metazoa</taxon>
        <taxon>Chordata</taxon>
        <taxon>Craniata</taxon>
        <taxon>Vertebrata</taxon>
        <taxon>Euteleostomi</taxon>
        <taxon>Mammalia</taxon>
        <taxon>Eutheria</taxon>
        <taxon>Euarchontoglires</taxon>
        <taxon>Primates</taxon>
        <taxon>Haplorrhini</taxon>
        <taxon>Catarrhini</taxon>
        <taxon>Hominidae</taxon>
        <taxon>Homo</taxon>
    </lineage>
</organism>
<evidence type="ECO:0000255" key="1"/>
<evidence type="ECO:0000255" key="2">
    <source>
        <dbReference type="PROSITE-ProRule" id="PRU00116"/>
    </source>
</evidence>
<evidence type="ECO:0000256" key="3">
    <source>
        <dbReference type="SAM" id="MobiDB-lite"/>
    </source>
</evidence>
<evidence type="ECO:0000305" key="4"/>
<protein>
    <recommendedName>
        <fullName>IQ and AAA domain-containing protein 1-like</fullName>
    </recommendedName>
    <alternativeName>
        <fullName>IQ and AAA domain-containing protein 1 pseudogene 1</fullName>
    </alternativeName>
</protein>
<accession>A6NCM1</accession>
<accession>A0A087WYV2</accession>
<name>IQCAL_HUMAN</name>